<reference key="1">
    <citation type="journal article" date="2007" name="PLoS ONE">
        <title>Analysis of the neurotoxin complex genes in Clostridium botulinum A1-A4 and B1 strains: BoNT/A3, /Ba4 and /B1 clusters are located within plasmids.</title>
        <authorList>
            <person name="Smith T.J."/>
            <person name="Hill K.K."/>
            <person name="Foley B.T."/>
            <person name="Detter J.C."/>
            <person name="Munk A.C."/>
            <person name="Bruce D.C."/>
            <person name="Doggett N.A."/>
            <person name="Smith L.A."/>
            <person name="Marks J.D."/>
            <person name="Xie G."/>
            <person name="Brettin T.S."/>
        </authorList>
    </citation>
    <scope>NUCLEOTIDE SEQUENCE [LARGE SCALE GENOMIC DNA]</scope>
    <source>
        <strain>Okra / Type B1</strain>
    </source>
</reference>
<name>CH60_CLOBK</name>
<proteinExistence type="inferred from homology"/>
<protein>
    <recommendedName>
        <fullName evidence="1">Chaperonin GroEL</fullName>
        <ecNumber evidence="1">5.6.1.7</ecNumber>
    </recommendedName>
    <alternativeName>
        <fullName evidence="1">60 kDa chaperonin</fullName>
    </alternativeName>
    <alternativeName>
        <fullName evidence="1">Chaperonin-60</fullName>
        <shortName evidence="1">Cpn60</shortName>
    </alternativeName>
</protein>
<dbReference type="EC" id="5.6.1.7" evidence="1"/>
<dbReference type="EMBL" id="CP000939">
    <property type="protein sequence ID" value="ACA45428.1"/>
    <property type="molecule type" value="Genomic_DNA"/>
</dbReference>
<dbReference type="RefSeq" id="WP_003357641.1">
    <property type="nucleotide sequence ID" value="NC_010516.1"/>
</dbReference>
<dbReference type="SMR" id="B1IFD4"/>
<dbReference type="GeneID" id="5185850"/>
<dbReference type="KEGG" id="cbb:CLD_1225"/>
<dbReference type="HOGENOM" id="CLU_016503_3_0_9"/>
<dbReference type="Proteomes" id="UP000008541">
    <property type="component" value="Chromosome"/>
</dbReference>
<dbReference type="GO" id="GO:0005737">
    <property type="term" value="C:cytoplasm"/>
    <property type="evidence" value="ECO:0007669"/>
    <property type="project" value="UniProtKB-SubCell"/>
</dbReference>
<dbReference type="GO" id="GO:0005524">
    <property type="term" value="F:ATP binding"/>
    <property type="evidence" value="ECO:0007669"/>
    <property type="project" value="UniProtKB-UniRule"/>
</dbReference>
<dbReference type="GO" id="GO:0140662">
    <property type="term" value="F:ATP-dependent protein folding chaperone"/>
    <property type="evidence" value="ECO:0007669"/>
    <property type="project" value="InterPro"/>
</dbReference>
<dbReference type="GO" id="GO:0016853">
    <property type="term" value="F:isomerase activity"/>
    <property type="evidence" value="ECO:0007669"/>
    <property type="project" value="UniProtKB-KW"/>
</dbReference>
<dbReference type="GO" id="GO:0051082">
    <property type="term" value="F:unfolded protein binding"/>
    <property type="evidence" value="ECO:0007669"/>
    <property type="project" value="UniProtKB-UniRule"/>
</dbReference>
<dbReference type="GO" id="GO:0042026">
    <property type="term" value="P:protein refolding"/>
    <property type="evidence" value="ECO:0007669"/>
    <property type="project" value="UniProtKB-UniRule"/>
</dbReference>
<dbReference type="CDD" id="cd03344">
    <property type="entry name" value="GroEL"/>
    <property type="match status" value="1"/>
</dbReference>
<dbReference type="FunFam" id="3.50.7.10:FF:000001">
    <property type="entry name" value="60 kDa chaperonin"/>
    <property type="match status" value="1"/>
</dbReference>
<dbReference type="Gene3D" id="3.50.7.10">
    <property type="entry name" value="GroEL"/>
    <property type="match status" value="1"/>
</dbReference>
<dbReference type="Gene3D" id="1.10.560.10">
    <property type="entry name" value="GroEL-like equatorial domain"/>
    <property type="match status" value="1"/>
</dbReference>
<dbReference type="Gene3D" id="3.30.260.10">
    <property type="entry name" value="TCP-1-like chaperonin intermediate domain"/>
    <property type="match status" value="1"/>
</dbReference>
<dbReference type="HAMAP" id="MF_00600">
    <property type="entry name" value="CH60"/>
    <property type="match status" value="1"/>
</dbReference>
<dbReference type="InterPro" id="IPR018370">
    <property type="entry name" value="Chaperonin_Cpn60_CS"/>
</dbReference>
<dbReference type="InterPro" id="IPR001844">
    <property type="entry name" value="Cpn60/GroEL"/>
</dbReference>
<dbReference type="InterPro" id="IPR002423">
    <property type="entry name" value="Cpn60/GroEL/TCP-1"/>
</dbReference>
<dbReference type="InterPro" id="IPR027409">
    <property type="entry name" value="GroEL-like_apical_dom_sf"/>
</dbReference>
<dbReference type="InterPro" id="IPR027413">
    <property type="entry name" value="GROEL-like_equatorial_sf"/>
</dbReference>
<dbReference type="InterPro" id="IPR027410">
    <property type="entry name" value="TCP-1-like_intermed_sf"/>
</dbReference>
<dbReference type="NCBIfam" id="TIGR02348">
    <property type="entry name" value="GroEL"/>
    <property type="match status" value="1"/>
</dbReference>
<dbReference type="NCBIfam" id="NF000592">
    <property type="entry name" value="PRK00013.1"/>
    <property type="match status" value="1"/>
</dbReference>
<dbReference type="NCBIfam" id="NF009487">
    <property type="entry name" value="PRK12849.1"/>
    <property type="match status" value="1"/>
</dbReference>
<dbReference type="NCBIfam" id="NF009488">
    <property type="entry name" value="PRK12850.1"/>
    <property type="match status" value="1"/>
</dbReference>
<dbReference type="NCBIfam" id="NF009489">
    <property type="entry name" value="PRK12851.1"/>
    <property type="match status" value="1"/>
</dbReference>
<dbReference type="PANTHER" id="PTHR45633">
    <property type="entry name" value="60 KDA HEAT SHOCK PROTEIN, MITOCHONDRIAL"/>
    <property type="match status" value="1"/>
</dbReference>
<dbReference type="Pfam" id="PF00118">
    <property type="entry name" value="Cpn60_TCP1"/>
    <property type="match status" value="1"/>
</dbReference>
<dbReference type="PRINTS" id="PR00298">
    <property type="entry name" value="CHAPERONIN60"/>
</dbReference>
<dbReference type="SUPFAM" id="SSF52029">
    <property type="entry name" value="GroEL apical domain-like"/>
    <property type="match status" value="1"/>
</dbReference>
<dbReference type="SUPFAM" id="SSF48592">
    <property type="entry name" value="GroEL equatorial domain-like"/>
    <property type="match status" value="1"/>
</dbReference>
<dbReference type="SUPFAM" id="SSF54849">
    <property type="entry name" value="GroEL-intermediate domain like"/>
    <property type="match status" value="1"/>
</dbReference>
<dbReference type="PROSITE" id="PS00296">
    <property type="entry name" value="CHAPERONINS_CPN60"/>
    <property type="match status" value="1"/>
</dbReference>
<accession>B1IFD4</accession>
<organism>
    <name type="scientific">Clostridium botulinum (strain Okra / Type B1)</name>
    <dbReference type="NCBI Taxonomy" id="498213"/>
    <lineage>
        <taxon>Bacteria</taxon>
        <taxon>Bacillati</taxon>
        <taxon>Bacillota</taxon>
        <taxon>Clostridia</taxon>
        <taxon>Eubacteriales</taxon>
        <taxon>Clostridiaceae</taxon>
        <taxon>Clostridium</taxon>
    </lineage>
</organism>
<keyword id="KW-0067">ATP-binding</keyword>
<keyword id="KW-0143">Chaperone</keyword>
<keyword id="KW-0963">Cytoplasm</keyword>
<keyword id="KW-0413">Isomerase</keyword>
<keyword id="KW-0547">Nucleotide-binding</keyword>
<sequence>MAKSLLFGEQARRSMEAGVDKLADTVRVTLGPKGRNVVLDKKFGSPLITNDGVTIAREIELEDPYENMGAQLVKEVATKTNDVAGDGTTTATLLAQAIIREGLKNVTAGANPIQIRTGIRKAVEKAVEEIKVISKPVNGKEDIARVAAISAASEEVGKLIADAMERVGNDGVITVEESKSMGTDLEVVEGMQFDRGYVSAYMVTDTEKMEAVLDDVYILITDKKISNIQEILPILEQIVQQGKKLLIISEDIEGEALSTLVLNKLRGTFTCVGVKAPGFGDRRKEMLQDIAILTGGEVISEELGRDLKDVTIDMLGTADSVKVTKENTTIVNGKGDKVAIKERVSQIRVQIEDTTSEFDKEKLQERLAKLAGGVAVIRVGAATETELKEEKLRIEDALAATKAAVEEGIVPGGGTAYIDIIPKIADLTSDIIDVKLGIDIIRKALEEPVRQIANNAGAEGSVIIEKVKATEAGVGYDALNDKYVDMLKTGIVDPTKVTRSALQNAASIASTFLTTEAAVADIPEKENTPPMAPGMGMDGMY</sequence>
<comment type="function">
    <text evidence="1">Together with its co-chaperonin GroES, plays an essential role in assisting protein folding. The GroEL-GroES system forms a nano-cage that allows encapsulation of the non-native substrate proteins and provides a physical environment optimized to promote and accelerate protein folding.</text>
</comment>
<comment type="catalytic activity">
    <reaction evidence="1">
        <text>ATP + H2O + a folded polypeptide = ADP + phosphate + an unfolded polypeptide.</text>
        <dbReference type="EC" id="5.6.1.7"/>
    </reaction>
</comment>
<comment type="subunit">
    <text evidence="1">Forms a cylinder of 14 subunits composed of two heptameric rings stacked back-to-back. Interacts with the co-chaperonin GroES.</text>
</comment>
<comment type="subcellular location">
    <subcellularLocation>
        <location evidence="1">Cytoplasm</location>
    </subcellularLocation>
</comment>
<comment type="similarity">
    <text evidence="1">Belongs to the chaperonin (HSP60) family.</text>
</comment>
<gene>
    <name evidence="1" type="primary">groEL</name>
    <name evidence="1" type="synonym">groL</name>
    <name type="ordered locus">CLD_1225</name>
</gene>
<evidence type="ECO:0000255" key="1">
    <source>
        <dbReference type="HAMAP-Rule" id="MF_00600"/>
    </source>
</evidence>
<feature type="chain" id="PRO_1000129994" description="Chaperonin GroEL">
    <location>
        <begin position="1"/>
        <end position="541"/>
    </location>
</feature>
<feature type="binding site" evidence="1">
    <location>
        <begin position="29"/>
        <end position="32"/>
    </location>
    <ligand>
        <name>ATP</name>
        <dbReference type="ChEBI" id="CHEBI:30616"/>
    </ligand>
</feature>
<feature type="binding site" evidence="1">
    <location>
        <begin position="86"/>
        <end position="90"/>
    </location>
    <ligand>
        <name>ATP</name>
        <dbReference type="ChEBI" id="CHEBI:30616"/>
    </ligand>
</feature>
<feature type="binding site" evidence="1">
    <location>
        <position position="413"/>
    </location>
    <ligand>
        <name>ATP</name>
        <dbReference type="ChEBI" id="CHEBI:30616"/>
    </ligand>
</feature>
<feature type="binding site" evidence="1">
    <location>
        <begin position="477"/>
        <end position="479"/>
    </location>
    <ligand>
        <name>ATP</name>
        <dbReference type="ChEBI" id="CHEBI:30616"/>
    </ligand>
</feature>
<feature type="binding site" evidence="1">
    <location>
        <position position="493"/>
    </location>
    <ligand>
        <name>ATP</name>
        <dbReference type="ChEBI" id="CHEBI:30616"/>
    </ligand>
</feature>